<accession>B3QYE8</accession>
<protein>
    <recommendedName>
        <fullName evidence="1">Small ribosomal subunit protein uS11</fullName>
    </recommendedName>
    <alternativeName>
        <fullName evidence="2">30S ribosomal protein S11</fullName>
    </alternativeName>
</protein>
<reference key="1">
    <citation type="submission" date="2008-06" db="EMBL/GenBank/DDBJ databases">
        <title>Complete sequence of Chloroherpeton thalassium ATCC 35110.</title>
        <authorList>
            <consortium name="US DOE Joint Genome Institute"/>
            <person name="Lucas S."/>
            <person name="Copeland A."/>
            <person name="Lapidus A."/>
            <person name="Glavina del Rio T."/>
            <person name="Dalin E."/>
            <person name="Tice H."/>
            <person name="Bruce D."/>
            <person name="Goodwin L."/>
            <person name="Pitluck S."/>
            <person name="Schmutz J."/>
            <person name="Larimer F."/>
            <person name="Land M."/>
            <person name="Hauser L."/>
            <person name="Kyrpides N."/>
            <person name="Mikhailova N."/>
            <person name="Liu Z."/>
            <person name="Li T."/>
            <person name="Zhao F."/>
            <person name="Overmann J."/>
            <person name="Bryant D.A."/>
            <person name="Richardson P."/>
        </authorList>
    </citation>
    <scope>NUCLEOTIDE SEQUENCE [LARGE SCALE GENOMIC DNA]</scope>
    <source>
        <strain>ATCC 35110 / GB-78</strain>
    </source>
</reference>
<name>RS11_CHLT3</name>
<keyword id="KW-1185">Reference proteome</keyword>
<keyword id="KW-0687">Ribonucleoprotein</keyword>
<keyword id="KW-0689">Ribosomal protein</keyword>
<keyword id="KW-0694">RNA-binding</keyword>
<keyword id="KW-0699">rRNA-binding</keyword>
<organism>
    <name type="scientific">Chloroherpeton thalassium (strain ATCC 35110 / GB-78)</name>
    <dbReference type="NCBI Taxonomy" id="517418"/>
    <lineage>
        <taxon>Bacteria</taxon>
        <taxon>Pseudomonadati</taxon>
        <taxon>Chlorobiota</taxon>
        <taxon>Chlorobiia</taxon>
        <taxon>Chlorobiales</taxon>
        <taxon>Chloroherpetonaceae</taxon>
        <taxon>Chloroherpeton</taxon>
    </lineage>
</organism>
<dbReference type="EMBL" id="CP001100">
    <property type="protein sequence ID" value="ACF13576.1"/>
    <property type="molecule type" value="Genomic_DNA"/>
</dbReference>
<dbReference type="RefSeq" id="WP_012499660.1">
    <property type="nucleotide sequence ID" value="NC_011026.1"/>
</dbReference>
<dbReference type="SMR" id="B3QYE8"/>
<dbReference type="STRING" id="517418.Ctha_1112"/>
<dbReference type="KEGG" id="cts:Ctha_1112"/>
<dbReference type="eggNOG" id="COG0100">
    <property type="taxonomic scope" value="Bacteria"/>
</dbReference>
<dbReference type="HOGENOM" id="CLU_072439_5_0_10"/>
<dbReference type="OrthoDB" id="9806415at2"/>
<dbReference type="Proteomes" id="UP000001208">
    <property type="component" value="Chromosome"/>
</dbReference>
<dbReference type="GO" id="GO:1990904">
    <property type="term" value="C:ribonucleoprotein complex"/>
    <property type="evidence" value="ECO:0007669"/>
    <property type="project" value="UniProtKB-KW"/>
</dbReference>
<dbReference type="GO" id="GO:0005840">
    <property type="term" value="C:ribosome"/>
    <property type="evidence" value="ECO:0007669"/>
    <property type="project" value="UniProtKB-KW"/>
</dbReference>
<dbReference type="GO" id="GO:0019843">
    <property type="term" value="F:rRNA binding"/>
    <property type="evidence" value="ECO:0007669"/>
    <property type="project" value="UniProtKB-UniRule"/>
</dbReference>
<dbReference type="GO" id="GO:0003735">
    <property type="term" value="F:structural constituent of ribosome"/>
    <property type="evidence" value="ECO:0007669"/>
    <property type="project" value="InterPro"/>
</dbReference>
<dbReference type="GO" id="GO:0006412">
    <property type="term" value="P:translation"/>
    <property type="evidence" value="ECO:0007669"/>
    <property type="project" value="UniProtKB-UniRule"/>
</dbReference>
<dbReference type="FunFam" id="3.30.420.80:FF:000001">
    <property type="entry name" value="30S ribosomal protein S11"/>
    <property type="match status" value="1"/>
</dbReference>
<dbReference type="Gene3D" id="3.30.420.80">
    <property type="entry name" value="Ribosomal protein S11"/>
    <property type="match status" value="1"/>
</dbReference>
<dbReference type="HAMAP" id="MF_01310">
    <property type="entry name" value="Ribosomal_uS11"/>
    <property type="match status" value="1"/>
</dbReference>
<dbReference type="InterPro" id="IPR001971">
    <property type="entry name" value="Ribosomal_uS11"/>
</dbReference>
<dbReference type="InterPro" id="IPR019981">
    <property type="entry name" value="Ribosomal_uS11_bac-type"/>
</dbReference>
<dbReference type="InterPro" id="IPR018102">
    <property type="entry name" value="Ribosomal_uS11_CS"/>
</dbReference>
<dbReference type="InterPro" id="IPR036967">
    <property type="entry name" value="Ribosomal_uS11_sf"/>
</dbReference>
<dbReference type="NCBIfam" id="NF003698">
    <property type="entry name" value="PRK05309.1"/>
    <property type="match status" value="1"/>
</dbReference>
<dbReference type="NCBIfam" id="TIGR03632">
    <property type="entry name" value="uS11_bact"/>
    <property type="match status" value="1"/>
</dbReference>
<dbReference type="PANTHER" id="PTHR11759">
    <property type="entry name" value="40S RIBOSOMAL PROTEIN S14/30S RIBOSOMAL PROTEIN S11"/>
    <property type="match status" value="1"/>
</dbReference>
<dbReference type="Pfam" id="PF00411">
    <property type="entry name" value="Ribosomal_S11"/>
    <property type="match status" value="1"/>
</dbReference>
<dbReference type="PIRSF" id="PIRSF002131">
    <property type="entry name" value="Ribosomal_S11"/>
    <property type="match status" value="1"/>
</dbReference>
<dbReference type="SUPFAM" id="SSF53137">
    <property type="entry name" value="Translational machinery components"/>
    <property type="match status" value="1"/>
</dbReference>
<dbReference type="PROSITE" id="PS00054">
    <property type="entry name" value="RIBOSOMAL_S11"/>
    <property type="match status" value="1"/>
</dbReference>
<sequence length="128" mass="13701">MATAPVKKKKKVNVTQDGIVHIKATFNNIAVTITDVTGNTVSWSTAGKNGFKGSKKNTPYASQVTAESAAKEAYDLGMRKVDVRIKGPGSGRDAAIRSLQNAGLEVKTISDITPLPHNGCRPPKRRRV</sequence>
<gene>
    <name evidence="1" type="primary">rpsK</name>
    <name type="ordered locus">Ctha_1112</name>
</gene>
<proteinExistence type="inferred from homology"/>
<evidence type="ECO:0000255" key="1">
    <source>
        <dbReference type="HAMAP-Rule" id="MF_01310"/>
    </source>
</evidence>
<evidence type="ECO:0000305" key="2"/>
<feature type="chain" id="PRO_1000141070" description="Small ribosomal subunit protein uS11">
    <location>
        <begin position="1"/>
        <end position="128"/>
    </location>
</feature>
<comment type="function">
    <text evidence="1">Located on the platform of the 30S subunit, it bridges several disparate RNA helices of the 16S rRNA. Forms part of the Shine-Dalgarno cleft in the 70S ribosome.</text>
</comment>
<comment type="subunit">
    <text evidence="1">Part of the 30S ribosomal subunit. Interacts with proteins S7 and S18. Binds to IF-3.</text>
</comment>
<comment type="similarity">
    <text evidence="1">Belongs to the universal ribosomal protein uS11 family.</text>
</comment>